<reference key="1">
    <citation type="journal article" date="1999" name="FEMS Microbiol. Lett.">
        <title>Comparative analysis of the LPS biosynthetic loci of the genetic subtypes of serovar Hardjo: Leptospira interrogans subtype Hardjoprajitno and Leptospira borgpetersenii subtype Hardjobovis.</title>
        <authorList>
            <person name="De la Pena-Moctezuma A."/>
            <person name="Bulach D.M."/>
            <person name="Kalambaheti T."/>
            <person name="Adler B."/>
        </authorList>
    </citation>
    <scope>NUCLEOTIDE SEQUENCE [GENOMIC DNA]</scope>
    <source>
        <strain>Hardjoprajitno / Serogroup Sejroe / Serovar hardjo</strain>
    </source>
</reference>
<feature type="chain" id="PRO_0000152388" description="Imidazole glycerol phosphate synthase subunit HisH">
    <location>
        <begin position="1"/>
        <end position="204"/>
    </location>
</feature>
<feature type="domain" description="Glutamine amidotransferase type-1">
    <location>
        <begin position="1"/>
        <end position="204"/>
    </location>
</feature>
<feature type="active site" description="Nucleophile" evidence="1">
    <location>
        <position position="80"/>
    </location>
</feature>
<feature type="active site" evidence="1">
    <location>
        <position position="186"/>
    </location>
</feature>
<feature type="active site" evidence="1">
    <location>
        <position position="188"/>
    </location>
</feature>
<dbReference type="EC" id="4.3.2.10"/>
<dbReference type="EC" id="3.5.1.2"/>
<dbReference type="EMBL" id="AF144879">
    <property type="protein sequence ID" value="AAD52164.1"/>
    <property type="molecule type" value="Genomic_DNA"/>
</dbReference>
<dbReference type="RefSeq" id="WP_002188939.1">
    <property type="nucleotide sequence ID" value="NZ_JQQK01000061.1"/>
</dbReference>
<dbReference type="SMR" id="Q9S4H8"/>
<dbReference type="UniPathway" id="UPA00031">
    <property type="reaction ID" value="UER00010"/>
</dbReference>
<dbReference type="GO" id="GO:0005737">
    <property type="term" value="C:cytoplasm"/>
    <property type="evidence" value="ECO:0007669"/>
    <property type="project" value="UniProtKB-SubCell"/>
</dbReference>
<dbReference type="GO" id="GO:0004359">
    <property type="term" value="F:glutaminase activity"/>
    <property type="evidence" value="ECO:0007669"/>
    <property type="project" value="UniProtKB-EC"/>
</dbReference>
<dbReference type="GO" id="GO:0000107">
    <property type="term" value="F:imidazoleglycerol-phosphate synthase activity"/>
    <property type="evidence" value="ECO:0007669"/>
    <property type="project" value="UniProtKB-UniRule"/>
</dbReference>
<dbReference type="GO" id="GO:0016829">
    <property type="term" value="F:lyase activity"/>
    <property type="evidence" value="ECO:0007669"/>
    <property type="project" value="UniProtKB-KW"/>
</dbReference>
<dbReference type="GO" id="GO:0000105">
    <property type="term" value="P:L-histidine biosynthetic process"/>
    <property type="evidence" value="ECO:0007669"/>
    <property type="project" value="UniProtKB-UniRule"/>
</dbReference>
<dbReference type="CDD" id="cd01748">
    <property type="entry name" value="GATase1_IGP_Synthase"/>
    <property type="match status" value="1"/>
</dbReference>
<dbReference type="Gene3D" id="3.40.50.880">
    <property type="match status" value="1"/>
</dbReference>
<dbReference type="HAMAP" id="MF_00278">
    <property type="entry name" value="HisH"/>
    <property type="match status" value="1"/>
</dbReference>
<dbReference type="InterPro" id="IPR029062">
    <property type="entry name" value="Class_I_gatase-like"/>
</dbReference>
<dbReference type="InterPro" id="IPR017926">
    <property type="entry name" value="GATASE"/>
</dbReference>
<dbReference type="InterPro" id="IPR010139">
    <property type="entry name" value="Imidazole-glycPsynth_HisH"/>
</dbReference>
<dbReference type="NCBIfam" id="TIGR01855">
    <property type="entry name" value="IMP_synth_hisH"/>
    <property type="match status" value="1"/>
</dbReference>
<dbReference type="PANTHER" id="PTHR42701">
    <property type="entry name" value="IMIDAZOLE GLYCEROL PHOSPHATE SYNTHASE SUBUNIT HISH"/>
    <property type="match status" value="1"/>
</dbReference>
<dbReference type="PANTHER" id="PTHR42701:SF1">
    <property type="entry name" value="IMIDAZOLE GLYCEROL PHOSPHATE SYNTHASE SUBUNIT HISH"/>
    <property type="match status" value="1"/>
</dbReference>
<dbReference type="Pfam" id="PF00117">
    <property type="entry name" value="GATase"/>
    <property type="match status" value="1"/>
</dbReference>
<dbReference type="PIRSF" id="PIRSF000495">
    <property type="entry name" value="Amidotransf_hisH"/>
    <property type="match status" value="1"/>
</dbReference>
<dbReference type="SUPFAM" id="SSF52317">
    <property type="entry name" value="Class I glutamine amidotransferase-like"/>
    <property type="match status" value="1"/>
</dbReference>
<dbReference type="PROSITE" id="PS51273">
    <property type="entry name" value="GATASE_TYPE_1"/>
    <property type="match status" value="1"/>
</dbReference>
<gene>
    <name type="primary">hisH</name>
</gene>
<comment type="function">
    <text evidence="1">IGPS catalyzes the conversion of PRFAR and glutamine to IGP, AICAR and glutamate. The HisH subunit catalyzes the hydrolysis of glutamine to glutamate and ammonia as part of the synthesis of IGP and AICAR. The resulting ammonia molecule is channeled to the active site of HisF (By similarity).</text>
</comment>
<comment type="catalytic activity">
    <reaction>
        <text>5-[(5-phospho-1-deoxy-D-ribulos-1-ylimino)methylamino]-1-(5-phospho-beta-D-ribosyl)imidazole-4-carboxamide + L-glutamine = D-erythro-1-(imidazol-4-yl)glycerol 3-phosphate + 5-amino-1-(5-phospho-beta-D-ribosyl)imidazole-4-carboxamide + L-glutamate + H(+)</text>
        <dbReference type="Rhea" id="RHEA:24793"/>
        <dbReference type="ChEBI" id="CHEBI:15378"/>
        <dbReference type="ChEBI" id="CHEBI:29985"/>
        <dbReference type="ChEBI" id="CHEBI:58278"/>
        <dbReference type="ChEBI" id="CHEBI:58359"/>
        <dbReference type="ChEBI" id="CHEBI:58475"/>
        <dbReference type="ChEBI" id="CHEBI:58525"/>
        <dbReference type="EC" id="4.3.2.10"/>
    </reaction>
</comment>
<comment type="catalytic activity">
    <reaction>
        <text>L-glutamine + H2O = L-glutamate + NH4(+)</text>
        <dbReference type="Rhea" id="RHEA:15889"/>
        <dbReference type="ChEBI" id="CHEBI:15377"/>
        <dbReference type="ChEBI" id="CHEBI:28938"/>
        <dbReference type="ChEBI" id="CHEBI:29985"/>
        <dbReference type="ChEBI" id="CHEBI:58359"/>
        <dbReference type="EC" id="3.5.1.2"/>
    </reaction>
</comment>
<comment type="pathway">
    <text>Amino-acid biosynthesis; L-histidine biosynthesis; L-histidine from 5-phospho-alpha-D-ribose 1-diphosphate: step 5/9.</text>
</comment>
<comment type="subunit">
    <text evidence="1">Heterodimer of HisH and HisF.</text>
</comment>
<comment type="subcellular location">
    <subcellularLocation>
        <location evidence="1">Cytoplasm</location>
    </subcellularLocation>
</comment>
<protein>
    <recommendedName>
        <fullName>Imidazole glycerol phosphate synthase subunit HisH</fullName>
        <ecNumber>4.3.2.10</ecNumber>
    </recommendedName>
    <alternativeName>
        <fullName>IGP synthase glutaminase subunit</fullName>
        <ecNumber>3.5.1.2</ecNumber>
    </alternativeName>
    <alternativeName>
        <fullName>IGP synthase subunit HisH</fullName>
    </alternativeName>
    <alternativeName>
        <fullName>ImGP synthase subunit HisH</fullName>
        <shortName>IGPS subunit HisH</shortName>
    </alternativeName>
</protein>
<accession>Q9S4H8</accession>
<keyword id="KW-0028">Amino-acid biosynthesis</keyword>
<keyword id="KW-0963">Cytoplasm</keyword>
<keyword id="KW-0315">Glutamine amidotransferase</keyword>
<keyword id="KW-0368">Histidine biosynthesis</keyword>
<keyword id="KW-0378">Hydrolase</keyword>
<keyword id="KW-0456">Lyase</keyword>
<name>HIS5_LEPIR</name>
<organism>
    <name type="scientific">Leptospira interrogans</name>
    <dbReference type="NCBI Taxonomy" id="173"/>
    <lineage>
        <taxon>Bacteria</taxon>
        <taxon>Pseudomonadati</taxon>
        <taxon>Spirochaetota</taxon>
        <taxon>Spirochaetia</taxon>
        <taxon>Leptospirales</taxon>
        <taxon>Leptospiraceae</taxon>
        <taxon>Leptospira</taxon>
    </lineage>
</organism>
<sequence>MIGILDYGVGNLKAFANVLKDLNFRNQIVKTEQELKSCTKIIMPGVGSFDSVMDKLSESGIRDVLSDLVMSKKIPVLGVCVGMQILASSSEEGTKSGLGWIQGKVKKFNFDQSNSLLTVPQIGWNEVTSIRDNKLLLNLEKNPRFYFLHSYYMECEEDNDVIAFADYGGNFTCAVNRDNIFGTQFHPEKSHHNGVALLRNFASL</sequence>
<evidence type="ECO:0000250" key="1"/>
<proteinExistence type="inferred from homology"/>